<organism>
    <name type="scientific">Bordetella petrii (strain ATCC BAA-461 / DSM 12804 / CCUG 43448)</name>
    <dbReference type="NCBI Taxonomy" id="340100"/>
    <lineage>
        <taxon>Bacteria</taxon>
        <taxon>Pseudomonadati</taxon>
        <taxon>Pseudomonadota</taxon>
        <taxon>Betaproteobacteria</taxon>
        <taxon>Burkholderiales</taxon>
        <taxon>Alcaligenaceae</taxon>
        <taxon>Bordetella</taxon>
    </lineage>
</organism>
<gene>
    <name evidence="1" type="primary">rpmH</name>
    <name type="ordered locus">Bpet5014</name>
</gene>
<proteinExistence type="inferred from homology"/>
<keyword id="KW-0687">Ribonucleoprotein</keyword>
<keyword id="KW-0689">Ribosomal protein</keyword>
<sequence length="44" mass="5209">MKRTYQPSVTRRKRTHGFRVRMKTRGGRAVLNARRAKGRKRLAV</sequence>
<protein>
    <recommendedName>
        <fullName evidence="1">Large ribosomal subunit protein bL34</fullName>
    </recommendedName>
    <alternativeName>
        <fullName evidence="2">50S ribosomal protein L34</fullName>
    </alternativeName>
</protein>
<feature type="chain" id="PRO_1000196007" description="Large ribosomal subunit protein bL34">
    <location>
        <begin position="1"/>
        <end position="44"/>
    </location>
</feature>
<reference key="1">
    <citation type="journal article" date="2008" name="BMC Genomics">
        <title>The missing link: Bordetella petrii is endowed with both the metabolic versatility of environmental bacteria and virulence traits of pathogenic Bordetellae.</title>
        <authorList>
            <person name="Gross R."/>
            <person name="Guzman C.A."/>
            <person name="Sebaihia M."/>
            <person name="Martin dos Santos V.A.P."/>
            <person name="Pieper D.H."/>
            <person name="Koebnik R."/>
            <person name="Lechner M."/>
            <person name="Bartels D."/>
            <person name="Buhrmester J."/>
            <person name="Choudhuri J.V."/>
            <person name="Ebensen T."/>
            <person name="Gaigalat L."/>
            <person name="Herrmann S."/>
            <person name="Khachane A.N."/>
            <person name="Larisch C."/>
            <person name="Link S."/>
            <person name="Linke B."/>
            <person name="Meyer F."/>
            <person name="Mormann S."/>
            <person name="Nakunst D."/>
            <person name="Rueckert C."/>
            <person name="Schneiker-Bekel S."/>
            <person name="Schulze K."/>
            <person name="Voerholter F.-J."/>
            <person name="Yevsa T."/>
            <person name="Engle J.T."/>
            <person name="Goldman W.E."/>
            <person name="Puehler A."/>
            <person name="Goebel U.B."/>
            <person name="Goesmann A."/>
            <person name="Bloecker H."/>
            <person name="Kaiser O."/>
            <person name="Martinez-Arias R."/>
        </authorList>
    </citation>
    <scope>NUCLEOTIDE SEQUENCE [LARGE SCALE GENOMIC DNA]</scope>
    <source>
        <strain>ATCC BAA-461 / DSM 12804 / CCUG 43448</strain>
    </source>
</reference>
<dbReference type="EMBL" id="AM902716">
    <property type="protein sequence ID" value="CAP45366.1"/>
    <property type="molecule type" value="Genomic_DNA"/>
</dbReference>
<dbReference type="SMR" id="A9IJC3"/>
<dbReference type="STRING" id="94624.Bpet5014"/>
<dbReference type="KEGG" id="bpt:Bpet5014"/>
<dbReference type="eggNOG" id="COG0230">
    <property type="taxonomic scope" value="Bacteria"/>
</dbReference>
<dbReference type="Proteomes" id="UP000001225">
    <property type="component" value="Chromosome"/>
</dbReference>
<dbReference type="GO" id="GO:1990904">
    <property type="term" value="C:ribonucleoprotein complex"/>
    <property type="evidence" value="ECO:0007669"/>
    <property type="project" value="UniProtKB-KW"/>
</dbReference>
<dbReference type="GO" id="GO:0005840">
    <property type="term" value="C:ribosome"/>
    <property type="evidence" value="ECO:0007669"/>
    <property type="project" value="UniProtKB-KW"/>
</dbReference>
<dbReference type="GO" id="GO:0003735">
    <property type="term" value="F:structural constituent of ribosome"/>
    <property type="evidence" value="ECO:0007669"/>
    <property type="project" value="InterPro"/>
</dbReference>
<dbReference type="GO" id="GO:0006412">
    <property type="term" value="P:translation"/>
    <property type="evidence" value="ECO:0007669"/>
    <property type="project" value="UniProtKB-UniRule"/>
</dbReference>
<dbReference type="FunFam" id="1.10.287.3980:FF:000001">
    <property type="entry name" value="Mitochondrial ribosomal protein L34"/>
    <property type="match status" value="1"/>
</dbReference>
<dbReference type="Gene3D" id="1.10.287.3980">
    <property type="match status" value="1"/>
</dbReference>
<dbReference type="HAMAP" id="MF_00391">
    <property type="entry name" value="Ribosomal_bL34"/>
    <property type="match status" value="1"/>
</dbReference>
<dbReference type="InterPro" id="IPR000271">
    <property type="entry name" value="Ribosomal_bL34"/>
</dbReference>
<dbReference type="InterPro" id="IPR020939">
    <property type="entry name" value="Ribosomal_bL34_CS"/>
</dbReference>
<dbReference type="NCBIfam" id="TIGR01030">
    <property type="entry name" value="rpmH_bact"/>
    <property type="match status" value="1"/>
</dbReference>
<dbReference type="PANTHER" id="PTHR14503:SF4">
    <property type="entry name" value="LARGE RIBOSOMAL SUBUNIT PROTEIN BL34M"/>
    <property type="match status" value="1"/>
</dbReference>
<dbReference type="PANTHER" id="PTHR14503">
    <property type="entry name" value="MITOCHONDRIAL RIBOSOMAL PROTEIN 34 FAMILY MEMBER"/>
    <property type="match status" value="1"/>
</dbReference>
<dbReference type="Pfam" id="PF00468">
    <property type="entry name" value="Ribosomal_L34"/>
    <property type="match status" value="1"/>
</dbReference>
<dbReference type="PROSITE" id="PS00784">
    <property type="entry name" value="RIBOSOMAL_L34"/>
    <property type="match status" value="1"/>
</dbReference>
<name>RL34_BORPD</name>
<evidence type="ECO:0000255" key="1">
    <source>
        <dbReference type="HAMAP-Rule" id="MF_00391"/>
    </source>
</evidence>
<evidence type="ECO:0000305" key="2"/>
<comment type="similarity">
    <text evidence="1">Belongs to the bacterial ribosomal protein bL34 family.</text>
</comment>
<accession>A9IJC3</accession>